<organism>
    <name type="scientific">Saccharomyces cerevisiae (strain ATCC 204508 / S288c)</name>
    <name type="common">Baker's yeast</name>
    <dbReference type="NCBI Taxonomy" id="559292"/>
    <lineage>
        <taxon>Eukaryota</taxon>
        <taxon>Fungi</taxon>
        <taxon>Dikarya</taxon>
        <taxon>Ascomycota</taxon>
        <taxon>Saccharomycotina</taxon>
        <taxon>Saccharomycetes</taxon>
        <taxon>Saccharomycetales</taxon>
        <taxon>Saccharomycetaceae</taxon>
        <taxon>Saccharomyces</taxon>
    </lineage>
</organism>
<sequence length="128" mass="14313">MEELICTYPYHSNLFMFLFLFFCPSKRARRGHPKFLFTLCYKSNHLIPKLLPPSLFTKRVMLNPSSHPPSPDFPTGSSASPRVKLRPSTLWAPPLTVSSDFAASSSSTAPVTVTDKPVTPAVSKRYQP</sequence>
<comment type="subcellular location">
    <subcellularLocation>
        <location evidence="2">Cytoplasm</location>
    </subcellularLocation>
    <subcellularLocation>
        <location evidence="2">Nucleus</location>
    </subcellularLocation>
</comment>
<comment type="miscellaneous">
    <text evidence="3">Present with 300 molecules/cell in log phase SD medium.</text>
</comment>
<name>YER4_YEAST</name>
<evidence type="ECO:0000256" key="1">
    <source>
        <dbReference type="SAM" id="MobiDB-lite"/>
    </source>
</evidence>
<evidence type="ECO:0000269" key="2">
    <source>
    </source>
</evidence>
<evidence type="ECO:0000269" key="3">
    <source>
    </source>
</evidence>
<evidence type="ECO:0000305" key="4"/>
<reference key="1">
    <citation type="journal article" date="1997" name="Nature">
        <title>The nucleotide sequence of Saccharomyces cerevisiae chromosome V.</title>
        <authorList>
            <person name="Dietrich F.S."/>
            <person name="Mulligan J.T."/>
            <person name="Hennessy K.M."/>
            <person name="Yelton M.A."/>
            <person name="Allen E."/>
            <person name="Araujo R."/>
            <person name="Aviles E."/>
            <person name="Berno A."/>
            <person name="Brennan T."/>
            <person name="Carpenter J."/>
            <person name="Chen E."/>
            <person name="Cherry J.M."/>
            <person name="Chung E."/>
            <person name="Duncan M."/>
            <person name="Guzman E."/>
            <person name="Hartzell G."/>
            <person name="Hunicke-Smith S."/>
            <person name="Hyman R.W."/>
            <person name="Kayser A."/>
            <person name="Komp C."/>
            <person name="Lashkari D."/>
            <person name="Lew H."/>
            <person name="Lin D."/>
            <person name="Mosedale D."/>
            <person name="Nakahara K."/>
            <person name="Namath A."/>
            <person name="Norgren R."/>
            <person name="Oefner P."/>
            <person name="Oh C."/>
            <person name="Petel F.X."/>
            <person name="Roberts D."/>
            <person name="Sehl P."/>
            <person name="Schramm S."/>
            <person name="Shogren T."/>
            <person name="Smith V."/>
            <person name="Taylor P."/>
            <person name="Wei Y."/>
            <person name="Botstein D."/>
            <person name="Davis R.W."/>
        </authorList>
    </citation>
    <scope>NUCLEOTIDE SEQUENCE [LARGE SCALE GENOMIC DNA]</scope>
    <source>
        <strain>ATCC 204508 / S288c</strain>
    </source>
</reference>
<reference key="2">
    <citation type="journal article" date="2014" name="G3 (Bethesda)">
        <title>The reference genome sequence of Saccharomyces cerevisiae: Then and now.</title>
        <authorList>
            <person name="Engel S.R."/>
            <person name="Dietrich F.S."/>
            <person name="Fisk D.G."/>
            <person name="Binkley G."/>
            <person name="Balakrishnan R."/>
            <person name="Costanzo M.C."/>
            <person name="Dwight S.S."/>
            <person name="Hitz B.C."/>
            <person name="Karra K."/>
            <person name="Nash R.S."/>
            <person name="Weng S."/>
            <person name="Wong E.D."/>
            <person name="Lloyd P."/>
            <person name="Skrzypek M.S."/>
            <person name="Miyasato S.R."/>
            <person name="Simison M."/>
            <person name="Cherry J.M."/>
        </authorList>
    </citation>
    <scope>GENOME REANNOTATION</scope>
    <source>
        <strain>ATCC 204508 / S288c</strain>
    </source>
</reference>
<reference key="3">
    <citation type="journal article" date="2007" name="Genome Res.">
        <title>Approaching a complete repository of sequence-verified protein-encoding clones for Saccharomyces cerevisiae.</title>
        <authorList>
            <person name="Hu Y."/>
            <person name="Rolfs A."/>
            <person name="Bhullar B."/>
            <person name="Murthy T.V.S."/>
            <person name="Zhu C."/>
            <person name="Berger M.F."/>
            <person name="Camargo A.A."/>
            <person name="Kelley F."/>
            <person name="McCarron S."/>
            <person name="Jepson D."/>
            <person name="Richardson A."/>
            <person name="Raphael J."/>
            <person name="Moreira D."/>
            <person name="Taycher E."/>
            <person name="Zuo D."/>
            <person name="Mohr S."/>
            <person name="Kane M.F."/>
            <person name="Williamson J."/>
            <person name="Simpson A.J.G."/>
            <person name="Bulyk M.L."/>
            <person name="Harlow E."/>
            <person name="Marsischky G."/>
            <person name="Kolodner R.D."/>
            <person name="LaBaer J."/>
        </authorList>
    </citation>
    <scope>NUCLEOTIDE SEQUENCE [GENOMIC DNA]</scope>
    <source>
        <strain>ATCC 204508 / S288c</strain>
    </source>
</reference>
<reference key="4">
    <citation type="journal article" date="2003" name="Nature">
        <title>Global analysis of protein localization in budding yeast.</title>
        <authorList>
            <person name="Huh W.-K."/>
            <person name="Falvo J.V."/>
            <person name="Gerke L.C."/>
            <person name="Carroll A.S."/>
            <person name="Howson R.W."/>
            <person name="Weissman J.S."/>
            <person name="O'Shea E.K."/>
        </authorList>
    </citation>
    <scope>SUBCELLULAR LOCATION [LARGE SCALE ANALYSIS]</scope>
</reference>
<reference key="5">
    <citation type="journal article" date="2003" name="Nature">
        <title>Global analysis of protein expression in yeast.</title>
        <authorList>
            <person name="Ghaemmaghami S."/>
            <person name="Huh W.-K."/>
            <person name="Bower K."/>
            <person name="Howson R.W."/>
            <person name="Belle A."/>
            <person name="Dephoure N."/>
            <person name="O'Shea E.K."/>
            <person name="Weissman J.S."/>
        </authorList>
    </citation>
    <scope>LEVEL OF PROTEIN EXPRESSION [LARGE SCALE ANALYSIS]</scope>
</reference>
<accession>P40057</accession>
<accession>I2HB57</accession>
<accession>Q6B0R8</accession>
<keyword id="KW-0963">Cytoplasm</keyword>
<keyword id="KW-0539">Nucleus</keyword>
<keyword id="KW-1185">Reference proteome</keyword>
<proteinExistence type="evidence at protein level"/>
<protein>
    <recommendedName>
        <fullName>Uncharacterized protein YER084W</fullName>
    </recommendedName>
</protein>
<feature type="chain" id="PRO_0000202638" description="Uncharacterized protein YER084W">
    <location>
        <begin position="1"/>
        <end position="128"/>
    </location>
</feature>
<feature type="region of interest" description="Disordered" evidence="1">
    <location>
        <begin position="62"/>
        <end position="83"/>
    </location>
</feature>
<feature type="region of interest" description="Disordered" evidence="1">
    <location>
        <begin position="101"/>
        <end position="128"/>
    </location>
</feature>
<feature type="compositionally biased region" description="Low complexity" evidence="1">
    <location>
        <begin position="101"/>
        <end position="114"/>
    </location>
</feature>
<feature type="sequence conflict" description="In Ref. 3; AAT93381." evidence="4" ref="3">
    <original>T</original>
    <variation>A</variation>
    <location>
        <position position="57"/>
    </location>
</feature>
<dbReference type="EMBL" id="U18839">
    <property type="protein sequence ID" value="AAB64639.1"/>
    <property type="molecule type" value="Genomic_DNA"/>
</dbReference>
<dbReference type="EMBL" id="AY693362">
    <property type="protein sequence ID" value="AAT93381.1"/>
    <property type="molecule type" value="Genomic_DNA"/>
</dbReference>
<dbReference type="EMBL" id="BK006939">
    <property type="protein sequence ID" value="DAA35103.1"/>
    <property type="molecule type" value="Genomic_DNA"/>
</dbReference>
<dbReference type="PIR" id="S50587">
    <property type="entry name" value="S50587"/>
</dbReference>
<dbReference type="RefSeq" id="NP_001257673.1">
    <property type="nucleotide sequence ID" value="NM_001270744.1"/>
</dbReference>
<dbReference type="BioGRID" id="300949">
    <property type="interactions" value="86"/>
</dbReference>
<dbReference type="DIP" id="DIP-4879N"/>
<dbReference type="FunCoup" id="P40057">
    <property type="interactions" value="79"/>
</dbReference>
<dbReference type="IntAct" id="P40057">
    <property type="interactions" value="2"/>
</dbReference>
<dbReference type="STRING" id="4932.YER084W"/>
<dbReference type="PaxDb" id="4932-YER084W"/>
<dbReference type="PeptideAtlas" id="P40057"/>
<dbReference type="EnsemblFungi" id="YER084W_mRNA">
    <property type="protein sequence ID" value="YER084W"/>
    <property type="gene ID" value="YER084W"/>
</dbReference>
<dbReference type="GeneID" id="856816"/>
<dbReference type="KEGG" id="sce:YER084W"/>
<dbReference type="AGR" id="SGD:S000000886"/>
<dbReference type="SGD" id="S000000886">
    <property type="gene designation" value="YER084W"/>
</dbReference>
<dbReference type="VEuPathDB" id="FungiDB:YER084W"/>
<dbReference type="HOGENOM" id="CLU_158167_0_0_1"/>
<dbReference type="InParanoid" id="P40057"/>
<dbReference type="OrthoDB" id="4053913at2759"/>
<dbReference type="BioCyc" id="YEAST:G3O-30254-MONOMER"/>
<dbReference type="BioGRID-ORCS" id="856816">
    <property type="hits" value="0 hits in 10 CRISPR screens"/>
</dbReference>
<dbReference type="PRO" id="PR:P40057"/>
<dbReference type="Proteomes" id="UP000002311">
    <property type="component" value="Chromosome V"/>
</dbReference>
<dbReference type="RNAct" id="P40057">
    <property type="molecule type" value="protein"/>
</dbReference>
<dbReference type="GO" id="GO:0005737">
    <property type="term" value="C:cytoplasm"/>
    <property type="evidence" value="ECO:0007669"/>
    <property type="project" value="UniProtKB-SubCell"/>
</dbReference>
<dbReference type="GO" id="GO:0005634">
    <property type="term" value="C:nucleus"/>
    <property type="evidence" value="ECO:0007669"/>
    <property type="project" value="UniProtKB-SubCell"/>
</dbReference>
<gene>
    <name type="ordered locus">YER084W</name>
</gene>